<proteinExistence type="inferred from homology"/>
<name>YBEY_BORT9</name>
<comment type="function">
    <text evidence="1">Single strand-specific metallo-endoribonuclease involved in late-stage 70S ribosome quality control and in maturation of the 3' terminus of the 16S rRNA.</text>
</comment>
<comment type="cofactor">
    <cofactor evidence="1">
        <name>Zn(2+)</name>
        <dbReference type="ChEBI" id="CHEBI:29105"/>
    </cofactor>
    <text evidence="1">Binds 1 zinc ion.</text>
</comment>
<comment type="subcellular location">
    <subcellularLocation>
        <location evidence="1">Cytoplasm</location>
    </subcellularLocation>
</comment>
<comment type="similarity">
    <text evidence="1">Belongs to the endoribonuclease YbeY family.</text>
</comment>
<organism>
    <name type="scientific">Borrelia turicatae (strain 91E135)</name>
    <dbReference type="NCBI Taxonomy" id="314724"/>
    <lineage>
        <taxon>Bacteria</taxon>
        <taxon>Pseudomonadati</taxon>
        <taxon>Spirochaetota</taxon>
        <taxon>Spirochaetia</taxon>
        <taxon>Spirochaetales</taxon>
        <taxon>Borreliaceae</taxon>
        <taxon>Borrelia</taxon>
    </lineage>
</organism>
<evidence type="ECO:0000255" key="1">
    <source>
        <dbReference type="HAMAP-Rule" id="MF_00009"/>
    </source>
</evidence>
<feature type="chain" id="PRO_1000199957" description="Endoribonuclease YbeY">
    <location>
        <begin position="1"/>
        <end position="148"/>
    </location>
</feature>
<feature type="binding site" evidence="1">
    <location>
        <position position="113"/>
    </location>
    <ligand>
        <name>Zn(2+)</name>
        <dbReference type="ChEBI" id="CHEBI:29105"/>
        <note>catalytic</note>
    </ligand>
</feature>
<feature type="binding site" evidence="1">
    <location>
        <position position="117"/>
    </location>
    <ligand>
        <name>Zn(2+)</name>
        <dbReference type="ChEBI" id="CHEBI:29105"/>
        <note>catalytic</note>
    </ligand>
</feature>
<feature type="binding site" evidence="1">
    <location>
        <position position="123"/>
    </location>
    <ligand>
        <name>Zn(2+)</name>
        <dbReference type="ChEBI" id="CHEBI:29105"/>
        <note>catalytic</note>
    </ligand>
</feature>
<accession>A1QYL0</accession>
<sequence length="148" mass="17761">MIKEELNLWAEGVEFKHWDAYYNFILSVLDFLCIKEYELSVILCNNEYIQKLNSQFRQKSEPTDVLSFNYLEESGQIDHKIQGDLIISLEYLEFSSLEFNVELYDELQRNTIHGILHLIGYTHKTNDFQNEEMLIIQEKVLRETRRVF</sequence>
<dbReference type="EC" id="3.1.-.-" evidence="1"/>
<dbReference type="EMBL" id="CP000049">
    <property type="protein sequence ID" value="AAX17402.1"/>
    <property type="molecule type" value="Genomic_DNA"/>
</dbReference>
<dbReference type="RefSeq" id="WP_011772021.1">
    <property type="nucleotide sequence ID" value="NZ_CP073176.1"/>
</dbReference>
<dbReference type="SMR" id="A1QYL0"/>
<dbReference type="KEGG" id="btu:BT0060"/>
<dbReference type="eggNOG" id="COG0319">
    <property type="taxonomic scope" value="Bacteria"/>
</dbReference>
<dbReference type="HOGENOM" id="CLU_106710_3_3_12"/>
<dbReference type="Proteomes" id="UP000001205">
    <property type="component" value="Chromosome"/>
</dbReference>
<dbReference type="GO" id="GO:0005737">
    <property type="term" value="C:cytoplasm"/>
    <property type="evidence" value="ECO:0007669"/>
    <property type="project" value="UniProtKB-SubCell"/>
</dbReference>
<dbReference type="GO" id="GO:0004222">
    <property type="term" value="F:metalloendopeptidase activity"/>
    <property type="evidence" value="ECO:0007669"/>
    <property type="project" value="InterPro"/>
</dbReference>
<dbReference type="GO" id="GO:0004521">
    <property type="term" value="F:RNA endonuclease activity"/>
    <property type="evidence" value="ECO:0007669"/>
    <property type="project" value="UniProtKB-UniRule"/>
</dbReference>
<dbReference type="GO" id="GO:0008270">
    <property type="term" value="F:zinc ion binding"/>
    <property type="evidence" value="ECO:0007669"/>
    <property type="project" value="UniProtKB-UniRule"/>
</dbReference>
<dbReference type="GO" id="GO:0006364">
    <property type="term" value="P:rRNA processing"/>
    <property type="evidence" value="ECO:0007669"/>
    <property type="project" value="UniProtKB-UniRule"/>
</dbReference>
<dbReference type="Gene3D" id="3.40.390.30">
    <property type="entry name" value="Metalloproteases ('zincins'), catalytic domain"/>
    <property type="match status" value="1"/>
</dbReference>
<dbReference type="HAMAP" id="MF_00009">
    <property type="entry name" value="Endoribonucl_YbeY"/>
    <property type="match status" value="1"/>
</dbReference>
<dbReference type="InterPro" id="IPR023091">
    <property type="entry name" value="MetalPrtase_cat_dom_sf_prd"/>
</dbReference>
<dbReference type="InterPro" id="IPR002036">
    <property type="entry name" value="YbeY"/>
</dbReference>
<dbReference type="InterPro" id="IPR020549">
    <property type="entry name" value="YbeY_CS"/>
</dbReference>
<dbReference type="NCBIfam" id="TIGR00043">
    <property type="entry name" value="rRNA maturation RNase YbeY"/>
    <property type="match status" value="1"/>
</dbReference>
<dbReference type="PANTHER" id="PTHR46986">
    <property type="entry name" value="ENDORIBONUCLEASE YBEY, CHLOROPLASTIC"/>
    <property type="match status" value="1"/>
</dbReference>
<dbReference type="PANTHER" id="PTHR46986:SF1">
    <property type="entry name" value="ENDORIBONUCLEASE YBEY, CHLOROPLASTIC"/>
    <property type="match status" value="1"/>
</dbReference>
<dbReference type="Pfam" id="PF02130">
    <property type="entry name" value="YbeY"/>
    <property type="match status" value="1"/>
</dbReference>
<dbReference type="SUPFAM" id="SSF55486">
    <property type="entry name" value="Metalloproteases ('zincins'), catalytic domain"/>
    <property type="match status" value="1"/>
</dbReference>
<dbReference type="PROSITE" id="PS01306">
    <property type="entry name" value="UPF0054"/>
    <property type="match status" value="1"/>
</dbReference>
<keyword id="KW-0963">Cytoplasm</keyword>
<keyword id="KW-0255">Endonuclease</keyword>
<keyword id="KW-0378">Hydrolase</keyword>
<keyword id="KW-0479">Metal-binding</keyword>
<keyword id="KW-0540">Nuclease</keyword>
<keyword id="KW-1185">Reference proteome</keyword>
<keyword id="KW-0690">Ribosome biogenesis</keyword>
<keyword id="KW-0698">rRNA processing</keyword>
<keyword id="KW-0862">Zinc</keyword>
<protein>
    <recommendedName>
        <fullName evidence="1">Endoribonuclease YbeY</fullName>
        <ecNumber evidence="1">3.1.-.-</ecNumber>
    </recommendedName>
</protein>
<reference key="1">
    <citation type="submission" date="2004-12" db="EMBL/GenBank/DDBJ databases">
        <title>The genome sequence of Borrelia hermsii and Borrelia turicatae: comparative analysis of two agents of endemic N. America relapsing fever.</title>
        <authorList>
            <person name="Porcella S.F."/>
            <person name="Raffel S.J."/>
            <person name="Schrumpf M.E."/>
            <person name="Montgomery B."/>
            <person name="Smith T."/>
            <person name="Schwan T.G."/>
        </authorList>
    </citation>
    <scope>NUCLEOTIDE SEQUENCE [LARGE SCALE GENOMIC DNA]</scope>
    <source>
        <strain>91E135</strain>
    </source>
</reference>
<gene>
    <name evidence="1" type="primary">ybeY</name>
    <name type="ordered locus">BT0060</name>
</gene>